<feature type="chain" id="PRO_0000239771" description="Synaptic vesicle glycoprotein 2C">
    <location>
        <begin position="1"/>
        <end position="727"/>
    </location>
</feature>
<feature type="topological domain" description="Cytoplasmic" evidence="5">
    <location>
        <begin position="1"/>
        <end position="154"/>
    </location>
</feature>
<feature type="transmembrane region" description="Helical" evidence="5">
    <location>
        <begin position="155"/>
        <end position="175"/>
    </location>
</feature>
<feature type="topological domain" description="Extracellular" evidence="5">
    <location>
        <begin position="176"/>
        <end position="191"/>
    </location>
</feature>
<feature type="transmembrane region" description="Helical" evidence="5">
    <location>
        <begin position="192"/>
        <end position="212"/>
    </location>
</feature>
<feature type="topological domain" description="Cytoplasmic" evidence="5">
    <location>
        <begin position="213"/>
        <end position="226"/>
    </location>
</feature>
<feature type="transmembrane region" description="Helical" evidence="5">
    <location>
        <begin position="227"/>
        <end position="247"/>
    </location>
</feature>
<feature type="topological domain" description="Extracellular" evidence="5">
    <location>
        <position position="248"/>
    </location>
</feature>
<feature type="transmembrane region" description="Helical" evidence="5">
    <location>
        <begin position="249"/>
        <end position="269"/>
    </location>
</feature>
<feature type="topological domain" description="Cytoplasmic" evidence="5">
    <location>
        <begin position="270"/>
        <end position="280"/>
    </location>
</feature>
<feature type="transmembrane region" description="Helical" evidence="5">
    <location>
        <begin position="281"/>
        <end position="301"/>
    </location>
</feature>
<feature type="topological domain" description="Extracellular" evidence="5">
    <location>
        <begin position="302"/>
        <end position="320"/>
    </location>
</feature>
<feature type="transmembrane region" description="Helical" evidence="5">
    <location>
        <begin position="321"/>
        <end position="341"/>
    </location>
</feature>
<feature type="topological domain" description="Cytoplasmic" evidence="5">
    <location>
        <begin position="342"/>
        <end position="437"/>
    </location>
</feature>
<feature type="transmembrane region" description="Helical" evidence="5">
    <location>
        <begin position="438"/>
        <end position="458"/>
    </location>
</feature>
<feature type="topological domain" description="Extracellular" evidence="5 14">
    <location>
        <begin position="459"/>
        <end position="578"/>
    </location>
</feature>
<feature type="transmembrane region" description="Helical" evidence="5">
    <location>
        <begin position="579"/>
        <end position="599"/>
    </location>
</feature>
<feature type="topological domain" description="Cytoplasmic" evidence="5">
    <location>
        <begin position="600"/>
        <end position="609"/>
    </location>
</feature>
<feature type="transmembrane region" description="Helical" evidence="5">
    <location>
        <begin position="610"/>
        <end position="630"/>
    </location>
</feature>
<feature type="topological domain" description="Extracellular" evidence="5">
    <location>
        <begin position="631"/>
        <end position="636"/>
    </location>
</feature>
<feature type="transmembrane region" description="Helical" evidence="5">
    <location>
        <begin position="637"/>
        <end position="657"/>
    </location>
</feature>
<feature type="topological domain" description="Cytoplasmic" evidence="5">
    <location>
        <begin position="658"/>
        <end position="669"/>
    </location>
</feature>
<feature type="transmembrane region" description="Helical" evidence="5">
    <location>
        <begin position="670"/>
        <end position="690"/>
    </location>
</feature>
<feature type="topological domain" description="Extracellular" evidence="5">
    <location>
        <begin position="691"/>
        <end position="698"/>
    </location>
</feature>
<feature type="transmembrane region" description="Helical" evidence="5">
    <location>
        <begin position="699"/>
        <end position="719"/>
    </location>
</feature>
<feature type="topological domain" description="Cytoplasmic" evidence="5">
    <location>
        <begin position="720"/>
        <end position="727"/>
    </location>
</feature>
<feature type="region of interest" description="Interaction with SYT1" evidence="1">
    <location>
        <begin position="1"/>
        <end position="57"/>
    </location>
</feature>
<feature type="region of interest" description="Disordered" evidence="6">
    <location>
        <begin position="24"/>
        <end position="84"/>
    </location>
</feature>
<feature type="region of interest" description="Disordered" evidence="6">
    <location>
        <begin position="109"/>
        <end position="128"/>
    </location>
</feature>
<feature type="region of interest" description="(Microbial infection) C.botulinum neurotoxin type A-binding" evidence="9">
    <location>
        <begin position="519"/>
        <end position="563"/>
    </location>
</feature>
<feature type="compositionally biased region" description="Basic and acidic residues" evidence="6">
    <location>
        <begin position="113"/>
        <end position="128"/>
    </location>
</feature>
<feature type="modified residue" description="Phosphoserine" evidence="2">
    <location>
        <position position="75"/>
    </location>
</feature>
<feature type="modified residue" description="Phosphoserine" evidence="2">
    <location>
        <position position="76"/>
    </location>
</feature>
<feature type="modified residue" description="Phosphothreonine" evidence="2">
    <location>
        <position position="79"/>
    </location>
</feature>
<feature type="modified residue" description="Phosphotyrosine" evidence="3">
    <location>
        <position position="466"/>
    </location>
</feature>
<feature type="glycosylation site" description="N-linked (GlcNAc...) asparagine" evidence="5">
    <location>
        <position position="480"/>
    </location>
</feature>
<feature type="glycosylation site" description="N-linked (GlcNAc...) asparagine" evidence="5">
    <location>
        <position position="484"/>
    </location>
</feature>
<feature type="glycosylation site" description="N-linked (GlcNAc...) asparagine" evidence="10 16">
    <location>
        <position position="534"/>
    </location>
</feature>
<feature type="glycosylation site" description="N-linked (GlcNAc...) asparagine" evidence="10 11 16">
    <location>
        <position position="559"/>
    </location>
</feature>
<feature type="glycosylation site" description="N-linked (GlcNAc...) asparagine" evidence="5 10">
    <location>
        <position position="565"/>
    </location>
</feature>
<feature type="sequence variant" id="VAR_050303" description="In dbSNP:rs2270927.">
    <original>T</original>
    <variation>S</variation>
    <location>
        <position position="482"/>
    </location>
</feature>
<feature type="sequence variant" id="VAR_050304" description="In dbSNP:rs31244.">
    <original>D</original>
    <variation>N</variation>
    <location>
        <position position="543"/>
    </location>
</feature>
<feature type="mutagenesis site" description="No change in interaction with C.botulinum neurotoxin type A heavy chain (botA, BoNT/A HC). Decreased molecular weight probably due to glycosylation loss, decreased interaction with BoNT/A HC." evidence="8 10 11">
    <original>N</original>
    <variation>A</variation>
    <location>
        <position position="559"/>
    </location>
</feature>
<feature type="mutagenesis site" description="Decreased molecular weight probably due to glycosylation loss, decreased binding to BoNT/A HC. Greater reduction in weight; when associated with Q-565." evidence="10">
    <original>N</original>
    <variation>Q</variation>
    <location>
        <position position="559"/>
    </location>
</feature>
<feature type="mutagenesis site" description="Decreased molecular weight probably due to glycosylation loss, decreased binding to BoNT/A HC." evidence="10">
    <original>S</original>
    <variation>A</variation>
    <location>
        <position position="561"/>
    </location>
</feature>
<feature type="mutagenesis site" description="No longer interacts with BoNT/A HC." evidence="8 11">
    <original>F</original>
    <variation>A</variation>
    <location>
        <position position="563"/>
    </location>
</feature>
<feature type="mutagenesis site" description="Decreased molecular weight probably due to glycosylation loss, no change in binding to BoNT/A heavy chain. Greater reduction in weight; when associated with Q-559." evidence="10">
    <original>N</original>
    <variation>Q</variation>
    <location>
        <position position="565"/>
    </location>
</feature>
<feature type="sequence conflict" description="In Ref. 1; AAI00825." evidence="13" ref="1">
    <original>F</original>
    <variation>S</variation>
    <location>
        <position position="346"/>
    </location>
</feature>
<feature type="strand" evidence="19">
    <location>
        <begin position="477"/>
        <end position="483"/>
    </location>
</feature>
<feature type="strand" evidence="19">
    <location>
        <begin position="487"/>
        <end position="494"/>
    </location>
</feature>
<feature type="strand" evidence="19">
    <location>
        <begin position="496"/>
        <end position="504"/>
    </location>
</feature>
<feature type="strand" evidence="19">
    <location>
        <begin position="506"/>
        <end position="514"/>
    </location>
</feature>
<feature type="strand" evidence="19">
    <location>
        <begin position="516"/>
        <end position="519"/>
    </location>
</feature>
<feature type="strand" evidence="19">
    <location>
        <begin position="521"/>
        <end position="524"/>
    </location>
</feature>
<feature type="strand" evidence="19">
    <location>
        <begin position="526"/>
        <end position="529"/>
    </location>
</feature>
<feature type="strand" evidence="19">
    <location>
        <begin position="531"/>
        <end position="534"/>
    </location>
</feature>
<feature type="strand" evidence="19">
    <location>
        <begin position="536"/>
        <end position="539"/>
    </location>
</feature>
<feature type="strand" evidence="19">
    <location>
        <begin position="541"/>
        <end position="544"/>
    </location>
</feature>
<feature type="helix" evidence="19">
    <location>
        <begin position="549"/>
        <end position="551"/>
    </location>
</feature>
<feature type="strand" evidence="19">
    <location>
        <begin position="552"/>
        <end position="554"/>
    </location>
</feature>
<feature type="strand" evidence="19">
    <location>
        <begin position="556"/>
        <end position="563"/>
    </location>
</feature>
<sequence length="727" mass="82342">MEDSYKDRTSLMKGAKDIAREVKKQTVKKVNQAVDRAQDEYTQRSYSRFQDEEDDDDYYPAGETYNGEANDDEGSSEATEGHDEDDEIYEGEYQGIPSMNQAKDSIVSVGQPKGDEYKDRRELESERRADEEELAQQYELIIQECGHGRFQWALFFVLGMALMADGVEVFVVGFVLPSAETDLCIPNSGSGWLGSIVYLGMMVGAFFWGGLADKVGRKQSLLICMSVNGFFAFLSSFVQGYGFFLFCRLLSGFGIGGAIPTVFSYFAEVLAREKRGEHLSWLCMFWMIGGIYASAMAWAIIPHYGWSFSMGSAYQFHSWRVFVIVCALPCVSSVVALTFMPESPRFLLEVGKHDEAWMILKLIHDTNMRARGQPEKVFTVNKIKTPKQIDELIEIESDTGTWYRRCFVRIRTELYGIWLTFMRCFNYPVRDNTIKLTIVWFTLSFGYYGLSVWFPDVIKPLQSDEYALLTRNVERDKYANFTINFTMENQIHTGMEYDNGRFIGVKFKSVTFKDSVFKSCTFEDVTSVNTYFKNCTFIDTVFDNTDFEPYKFIDSEFKNCSFFHNKTGCQITFDDDYSAYWIYFVNFLGTLAVLPGNIVSALLMDRIGRLTMLGGSMVLSGISCFFLWFGTSESMMIGMLCLYNGLTISAWNSLDVVTVELYPTDRRATGFGFLNALCKAAAVLGNLIFGSLVSITKSIPILLASTVLVCGGLVGLCLPDTRTQVLM</sequence>
<comment type="function">
    <text evidence="4">Plays a role in the control of regulated secretion in neural and endocrine cells, enhancing selectively low-frequency neurotransmission. Positively regulates vesicle fusion by maintaining the readily releasable pool of secretory vesicles.</text>
</comment>
<comment type="function">
    <text evidence="8 9 10 11 12">(Microbial infection) Receptor for C.botulinum neurotoxin type A (BoNT/A, botA); the toxin probably binds via extracellular loop 4 (PubMed:27313224). Recognition by BoNT/A relies on both protein-protein and protein-N-glycosylation; glycosylation of Asn-559 increases its affinity for BoNT/A (PubMed:27313224). Also serves as a receptor for the closely related C.botulinum neurotoxin type A2; glycosylation is not essential but enhances the interaction (PubMed:29649119).</text>
</comment>
<comment type="function">
    <text evidence="7">(Microbial infection) Possible receptor for C.botulinum neurotoxin type D (BoNT/D, botD); note that type D does not usually infect humans.</text>
</comment>
<comment type="subunit">
    <text evidence="4">Interacts with SYT1 in a calcium-dependent manner.</text>
</comment>
<comment type="subunit">
    <text evidence="8 9 11 12">(Microbial infection) Interacts with C.botulinum neurotoxin type A1 and type A2 (BoNT/A, botA) (PubMed:29649119). Interaction is improved by glycosylation of SV2 (PubMed:29649119).</text>
</comment>
<comment type="interaction">
    <interactant intactId="EBI-16081469">
        <id>Q496J9</id>
    </interactant>
    <interactant intactId="EBI-8178893">
        <id>P0DPI0</id>
        <label>botA</label>
    </interactant>
    <organismsDiffer>true</organismsDiffer>
    <experiments>4</experiments>
</comment>
<comment type="subcellular location">
    <subcellularLocation>
        <location evidence="4">Cytoplasmic vesicle</location>
        <location evidence="4">Secretory vesicle</location>
        <location evidence="4">Synaptic vesicle membrane</location>
        <topology evidence="4">Multi-pass membrane protein</topology>
    </subcellularLocation>
    <text evidence="4">Enriched in small synaptic vesicles and adrenal microsomes, not present in chromaffin granules. Associated with both insulin granules and synaptic-like microvesicles in insulin-secreting cells of the pancreas.</text>
</comment>
<comment type="PTM">
    <text evidence="9 10 11">N-glycosylated. Upon expression in a kidney cell line the most abundant glycan on Asn-534 is GlcNAc(3)Hex(5), while on Asn-559 and Asn-565 the most abundant glycan is GlcNAc2Fuc1Man3GlcNAc3Gal3. Both Asn-559 and Asn-565 have a high degree of glycan heterogeneity (PubMed:27313224).</text>
</comment>
<comment type="similarity">
    <text evidence="13">Belongs to the major facilitator superfamily.</text>
</comment>
<evidence type="ECO:0000250" key="1"/>
<evidence type="ECO:0000250" key="2">
    <source>
        <dbReference type="UniProtKB" id="Q7L0J3"/>
    </source>
</evidence>
<evidence type="ECO:0000250" key="3">
    <source>
        <dbReference type="UniProtKB" id="Q9JIS5"/>
    </source>
</evidence>
<evidence type="ECO:0000250" key="4">
    <source>
        <dbReference type="UniProtKB" id="Q9Z2I6"/>
    </source>
</evidence>
<evidence type="ECO:0000255" key="5"/>
<evidence type="ECO:0000256" key="6">
    <source>
        <dbReference type="SAM" id="MobiDB-lite"/>
    </source>
</evidence>
<evidence type="ECO:0000269" key="7">
    <source>
    </source>
</evidence>
<evidence type="ECO:0000269" key="8">
    <source>
    </source>
</evidence>
<evidence type="ECO:0000269" key="9">
    <source>
    </source>
</evidence>
<evidence type="ECO:0000269" key="10">
    <source>
    </source>
</evidence>
<evidence type="ECO:0000269" key="11">
    <source>
    </source>
</evidence>
<evidence type="ECO:0000269" key="12">
    <source>
    </source>
</evidence>
<evidence type="ECO:0000305" key="13"/>
<evidence type="ECO:0000305" key="14">
    <source>
    </source>
</evidence>
<evidence type="ECO:0007744" key="15">
    <source>
        <dbReference type="PDB" id="4JRA"/>
    </source>
</evidence>
<evidence type="ECO:0007744" key="16">
    <source>
        <dbReference type="PDB" id="5JLV"/>
    </source>
</evidence>
<evidence type="ECO:0007744" key="17">
    <source>
        <dbReference type="PDB" id="5MOY"/>
    </source>
</evidence>
<evidence type="ECO:0007744" key="18">
    <source>
        <dbReference type="PDB" id="6ES1"/>
    </source>
</evidence>
<evidence type="ECO:0007829" key="19">
    <source>
        <dbReference type="PDB" id="5JLV"/>
    </source>
</evidence>
<organism>
    <name type="scientific">Homo sapiens</name>
    <name type="common">Human</name>
    <dbReference type="NCBI Taxonomy" id="9606"/>
    <lineage>
        <taxon>Eukaryota</taxon>
        <taxon>Metazoa</taxon>
        <taxon>Chordata</taxon>
        <taxon>Craniata</taxon>
        <taxon>Vertebrata</taxon>
        <taxon>Euteleostomi</taxon>
        <taxon>Mammalia</taxon>
        <taxon>Eutheria</taxon>
        <taxon>Euarchontoglires</taxon>
        <taxon>Primates</taxon>
        <taxon>Haplorrhini</taxon>
        <taxon>Catarrhini</taxon>
        <taxon>Hominidae</taxon>
        <taxon>Homo</taxon>
    </lineage>
</organism>
<proteinExistence type="evidence at protein level"/>
<protein>
    <recommendedName>
        <fullName>Synaptic vesicle glycoprotein 2C</fullName>
    </recommendedName>
</protein>
<keyword id="KW-0002">3D-structure</keyword>
<keyword id="KW-0968">Cytoplasmic vesicle</keyword>
<keyword id="KW-0325">Glycoprotein</keyword>
<keyword id="KW-0472">Membrane</keyword>
<keyword id="KW-0532">Neurotransmitter transport</keyword>
<keyword id="KW-0597">Phosphoprotein</keyword>
<keyword id="KW-1267">Proteomics identification</keyword>
<keyword id="KW-1185">Reference proteome</keyword>
<keyword id="KW-0770">Synapse</keyword>
<keyword id="KW-0812">Transmembrane</keyword>
<keyword id="KW-1133">Transmembrane helix</keyword>
<keyword id="KW-0813">Transport</keyword>
<gene>
    <name type="primary">SV2C</name>
    <name type="synonym">KIAA1054</name>
</gene>
<name>SV2C_HUMAN</name>
<reference key="1">
    <citation type="journal article" date="2004" name="Genome Res.">
        <title>The status, quality, and expansion of the NIH full-length cDNA project: the Mammalian Gene Collection (MGC).</title>
        <authorList>
            <consortium name="The MGC Project Team"/>
        </authorList>
    </citation>
    <scope>NUCLEOTIDE SEQUENCE [LARGE SCALE MRNA]</scope>
</reference>
<reference key="2">
    <citation type="journal article" date="1999" name="DNA Res.">
        <title>Prediction of the coding sequences of unidentified human genes. XIV. The complete sequences of 100 new cDNA clones from brain which code for large proteins in vitro.</title>
        <authorList>
            <person name="Kikuno R."/>
            <person name="Nagase T."/>
            <person name="Ishikawa K."/>
            <person name="Hirosawa M."/>
            <person name="Miyajima N."/>
            <person name="Tanaka A."/>
            <person name="Kotani H."/>
            <person name="Nomura N."/>
            <person name="Ohara O."/>
        </authorList>
    </citation>
    <scope>NUCLEOTIDE SEQUENCE [LARGE SCALE MRNA] OF 248-727</scope>
    <source>
        <tissue>Brain</tissue>
    </source>
</reference>
<reference key="3">
    <citation type="journal article" date="2011" name="PLoS Pathog.">
        <title>Botulinum neurotoxin D uses synaptic vesicle protein SV2 and gangliosides as receptors.</title>
        <authorList>
            <person name="Peng L."/>
            <person name="Tepp W.H."/>
            <person name="Johnson E.A."/>
            <person name="Dong M."/>
        </authorList>
    </citation>
    <scope>POSSIBLE FUNCTION AS C.BOTULINUM NEUROTOXIN TYPE D RECEPTOR (MICROBIAL INFECTION)</scope>
</reference>
<reference key="4">
    <citation type="journal article" date="2016" name="Biochem. J.">
        <title>Only the complex N559-glycan in the synaptic vesicle glycoprotein 2C mediates high affinity binding to botulinum neurotoxin serotype A1.</title>
        <authorList>
            <person name="Mahrhold S."/>
            <person name="Bergstroem T."/>
            <person name="Stern D."/>
            <person name="Dorner B.G."/>
            <person name="Aastot C."/>
            <person name="Rummel A."/>
        </authorList>
    </citation>
    <scope>FUNCTION AS C.BOTULINUM NEUROTOXIN TYPE A RECEPTOR (MICROBIAL INFECTION)</scope>
    <scope>SUBUNIT (MICROBIAL INFECTION)</scope>
    <scope>TOPOLOGY</scope>
    <scope>GLYCOSYLATION AT ASN-534; ASN-559 AND ASN-565</scope>
    <scope>MUTAGENESIS OF ASN-559; SER-561 AND ASN-565</scope>
</reference>
<reference evidence="15" key="5">
    <citation type="journal article" date="2014" name="Nature">
        <title>Structural basis for recognition of synaptic vesicle protein 2C by botulinum neurotoxin A.</title>
        <authorList>
            <person name="Benoit R.M."/>
            <person name="Frey D."/>
            <person name="Hilbert M."/>
            <person name="Kevenaar J.T."/>
            <person name="Wieser M.M."/>
            <person name="Stirnimann C.U."/>
            <person name="McMillan D."/>
            <person name="Ceska T."/>
            <person name="Lebon F."/>
            <person name="Jaussi R."/>
            <person name="Steinmetz M.O."/>
            <person name="Schertler G.F."/>
            <person name="Hoogenraad C.C."/>
            <person name="Capitani G."/>
            <person name="Kammerer R.A."/>
        </authorList>
    </citation>
    <scope>X-RAY CRYSTALLOGRAPHY (2.30 ANGSTROMS) OF 871-1296 IN COMPLEX WITH C.BOTULINUM NEUROTOXIN TYPE A HEAVY CHAIN C-TERMINUS</scope>
    <scope>SUBUNIT (MICROBIAL INFECTION)</scope>
    <scope>MUTAGENESIS OF ASN-559 AND PHE-563</scope>
</reference>
<reference evidence="16" key="6">
    <citation type="journal article" date="2016" name="Nat. Struct. Mol. Biol.">
        <title>N-linked glycosylation of SV2 is required for binding and uptake of botulinum neurotoxin A.</title>
        <authorList>
            <person name="Yao G."/>
            <person name="Zhang S."/>
            <person name="Mahrhold S."/>
            <person name="Lam K.H."/>
            <person name="Stern D."/>
            <person name="Bagramyan K."/>
            <person name="Perry K."/>
            <person name="Kalkum M."/>
            <person name="Rummel A."/>
            <person name="Dong M."/>
            <person name="Jin R."/>
        </authorList>
    </citation>
    <scope>X-RAY CRYSTALLOGRAPHY (2.00 ANGSTROMS) OF GLYCOSYLATED 473-567</scope>
    <scope>FUNCTION AS C.BOTULINUM NEUROTOXIN TYPE A RECEPTOR (MICROBIAL INFECTION)</scope>
    <scope>SUBUNIT (MICROBIAL INFECTION)</scope>
    <scope>GLYCOSYLATION AT ASN-534 AND ASN-559</scope>
</reference>
<reference evidence="17" key="7">
    <citation type="journal article" date="2017" name="Sci. Rep.">
        <title>Crystal structure of the BoNT/A2 receptor-binding domain in complex with the luminal domain of its neuronal receptor SV2C.</title>
        <authorList>
            <person name="Benoit R.M."/>
            <person name="Scharer M.A."/>
            <person name="Wieser M.M."/>
            <person name="Li X."/>
            <person name="Frey D."/>
            <person name="Kammerer R.A."/>
        </authorList>
    </citation>
    <scope>X-RAY CRYSTALLOGRAPHY (2.30 ANGSTROMS) OF 456-574 IN COMPLEX WITH C.BOTULINUM NEUROTOXIN TYPE A C-TERMINUS</scope>
    <scope>FUNCTION AS C.BOTULINUM NEUROTOXIN TYPE A RECEPTOR (MICROBIAL INFECTION)</scope>
    <scope>SUBUNIT (MICROBIAL INFECTION)</scope>
    <scope>MUTAGENESIS OF ASN-559 AND PHE-563</scope>
</reference>
<reference evidence="18" key="8">
    <citation type="journal article" date="2018" name="Toxins">
        <title>Crystal structure of botulinum neurotoxin A2 in complex with the human protein receptor SV2C reveals plasticity in receptor binding.</title>
        <authorList>
            <person name="Gustafsson R."/>
            <person name="Zhang S."/>
            <person name="Masuyer G."/>
            <person name="Dong M."/>
            <person name="Stenmark P."/>
        </authorList>
    </citation>
    <scope>X-RAY CRYSTALLOGRAPHY (2.00 ANGSTROMS) OF 474-567 IN COMPLEX WITH C.BOTULINUM NEUROTOXIN TYPE A2 C-TERMINUS</scope>
    <scope>FUNCTION AS C.BOTULINUM NEUROTOXIN TYPE A2 RECEPTOR (MICROBIAL INFECTION)</scope>
    <scope>SUBUNIT (MICROBIAL INFECTION)</scope>
</reference>
<accession>Q496J9</accession>
<accession>Q496K1</accession>
<accession>Q9UPU8</accession>
<dbReference type="EMBL" id="BC100824">
    <property type="protein sequence ID" value="AAI00825.1"/>
    <property type="molecule type" value="mRNA"/>
</dbReference>
<dbReference type="EMBL" id="BC100825">
    <property type="protein sequence ID" value="AAI00826.1"/>
    <property type="molecule type" value="mRNA"/>
</dbReference>
<dbReference type="EMBL" id="BC100826">
    <property type="protein sequence ID" value="AAI00827.1"/>
    <property type="molecule type" value="mRNA"/>
</dbReference>
<dbReference type="EMBL" id="BC100827">
    <property type="protein sequence ID" value="AAI00828.1"/>
    <property type="molecule type" value="mRNA"/>
</dbReference>
<dbReference type="EMBL" id="AB028977">
    <property type="protein sequence ID" value="BAA83006.1"/>
    <property type="molecule type" value="mRNA"/>
</dbReference>
<dbReference type="CCDS" id="CCDS43331.1"/>
<dbReference type="RefSeq" id="NP_055794.3">
    <property type="nucleotide sequence ID" value="NM_014979.4"/>
</dbReference>
<dbReference type="RefSeq" id="XP_011541583.1">
    <property type="nucleotide sequence ID" value="XM_011543281.4"/>
</dbReference>
<dbReference type="RefSeq" id="XP_011541584.2">
    <property type="nucleotide sequence ID" value="XM_011543282.4"/>
</dbReference>
<dbReference type="PDB" id="4JRA">
    <property type="method" value="X-ray"/>
    <property type="resolution" value="2.30 A"/>
    <property type="chains" value="C/D=456-574"/>
</dbReference>
<dbReference type="PDB" id="5JLV">
    <property type="method" value="X-ray"/>
    <property type="resolution" value="2.00 A"/>
    <property type="chains" value="C/D=473-567"/>
</dbReference>
<dbReference type="PDB" id="5MOY">
    <property type="method" value="X-ray"/>
    <property type="resolution" value="2.30 A"/>
    <property type="chains" value="B=456-574"/>
</dbReference>
<dbReference type="PDB" id="6ES1">
    <property type="method" value="X-ray"/>
    <property type="resolution" value="2.00 A"/>
    <property type="chains" value="B=474-567"/>
</dbReference>
<dbReference type="PDB" id="7UIA">
    <property type="method" value="X-ray"/>
    <property type="resolution" value="2.59 A"/>
    <property type="chains" value="C/F=473-568"/>
</dbReference>
<dbReference type="PDB" id="7UIB">
    <property type="method" value="X-ray"/>
    <property type="resolution" value="2.77 A"/>
    <property type="chains" value="C/F=473-568"/>
</dbReference>
<dbReference type="PDBsum" id="4JRA"/>
<dbReference type="PDBsum" id="5JLV"/>
<dbReference type="PDBsum" id="5MOY"/>
<dbReference type="PDBsum" id="6ES1"/>
<dbReference type="PDBsum" id="7UIA"/>
<dbReference type="PDBsum" id="7UIB"/>
<dbReference type="SMR" id="Q496J9"/>
<dbReference type="BioGRID" id="116636">
    <property type="interactions" value="12"/>
</dbReference>
<dbReference type="DIP" id="DIP-60687N"/>
<dbReference type="FunCoup" id="Q496J9">
    <property type="interactions" value="318"/>
</dbReference>
<dbReference type="IntAct" id="Q496J9">
    <property type="interactions" value="10"/>
</dbReference>
<dbReference type="STRING" id="9606.ENSP00000423541"/>
<dbReference type="ChEMBL" id="CHEMBL4665594"/>
<dbReference type="TCDB" id="2.A.1.22.6">
    <property type="family name" value="the major facilitator superfamily (mfs)"/>
</dbReference>
<dbReference type="GlyCosmos" id="Q496J9">
    <property type="glycosylation" value="5 sites, No reported glycans"/>
</dbReference>
<dbReference type="GlyGen" id="Q496J9">
    <property type="glycosylation" value="6 sites, 1 O-linked glycan (1 site)"/>
</dbReference>
<dbReference type="iPTMnet" id="Q496J9"/>
<dbReference type="PhosphoSitePlus" id="Q496J9"/>
<dbReference type="BioMuta" id="SV2C"/>
<dbReference type="DMDM" id="108860965"/>
<dbReference type="MassIVE" id="Q496J9"/>
<dbReference type="PaxDb" id="9606-ENSP00000423541"/>
<dbReference type="PeptideAtlas" id="Q496J9"/>
<dbReference type="ProteomicsDB" id="61995"/>
<dbReference type="Antibodypedia" id="24435">
    <property type="antibodies" value="126 antibodies from 24 providers"/>
</dbReference>
<dbReference type="DNASU" id="22987"/>
<dbReference type="Ensembl" id="ENST00000502798.7">
    <property type="protein sequence ID" value="ENSP00000423541.2"/>
    <property type="gene ID" value="ENSG00000122012.14"/>
</dbReference>
<dbReference type="GeneID" id="22987"/>
<dbReference type="KEGG" id="hsa:22987"/>
<dbReference type="MANE-Select" id="ENST00000502798.7">
    <property type="protein sequence ID" value="ENSP00000423541.2"/>
    <property type="RefSeq nucleotide sequence ID" value="NM_014979.4"/>
    <property type="RefSeq protein sequence ID" value="NP_055794.3"/>
</dbReference>
<dbReference type="UCSC" id="uc003kei.2">
    <property type="organism name" value="human"/>
</dbReference>
<dbReference type="AGR" id="HGNC:30670"/>
<dbReference type="CTD" id="22987"/>
<dbReference type="DisGeNET" id="22987"/>
<dbReference type="GeneCards" id="SV2C"/>
<dbReference type="HGNC" id="HGNC:30670">
    <property type="gene designation" value="SV2C"/>
</dbReference>
<dbReference type="HPA" id="ENSG00000122012">
    <property type="expression patterns" value="Group enriched (brain, retina)"/>
</dbReference>
<dbReference type="MIM" id="610291">
    <property type="type" value="gene"/>
</dbReference>
<dbReference type="neXtProt" id="NX_Q496J9"/>
<dbReference type="OpenTargets" id="ENSG00000122012"/>
<dbReference type="PharmGKB" id="PA25005"/>
<dbReference type="VEuPathDB" id="HostDB:ENSG00000122012"/>
<dbReference type="eggNOG" id="KOG0255">
    <property type="taxonomic scope" value="Eukaryota"/>
</dbReference>
<dbReference type="GeneTree" id="ENSGT00950000182940"/>
<dbReference type="HOGENOM" id="CLU_001265_46_15_1"/>
<dbReference type="InParanoid" id="Q496J9"/>
<dbReference type="OMA" id="HDEYKDR"/>
<dbReference type="OrthoDB" id="433512at2759"/>
<dbReference type="PAN-GO" id="Q496J9">
    <property type="GO annotations" value="3 GO annotations based on evolutionary models"/>
</dbReference>
<dbReference type="PhylomeDB" id="Q496J9"/>
<dbReference type="TreeFam" id="TF324824"/>
<dbReference type="PathwayCommons" id="Q496J9"/>
<dbReference type="Reactome" id="R-HSA-5250955">
    <property type="pathway name" value="Toxicity of botulinum toxin type D (botD)"/>
</dbReference>
<dbReference type="Reactome" id="R-HSA-5250968">
    <property type="pathway name" value="Toxicity of botulinum toxin type A (botA)"/>
</dbReference>
<dbReference type="Reactome" id="R-HSA-5250981">
    <property type="pathway name" value="Toxicity of botulinum toxin type F (botF)"/>
</dbReference>
<dbReference type="SignaLink" id="Q496J9"/>
<dbReference type="BioGRID-ORCS" id="22987">
    <property type="hits" value="15 hits in 1148 CRISPR screens"/>
</dbReference>
<dbReference type="ChiTaRS" id="SV2C">
    <property type="organism name" value="human"/>
</dbReference>
<dbReference type="EvolutionaryTrace" id="Q496J9"/>
<dbReference type="GenomeRNAi" id="22987"/>
<dbReference type="Pharos" id="Q496J9">
    <property type="development level" value="Tbio"/>
</dbReference>
<dbReference type="PRO" id="PR:Q496J9"/>
<dbReference type="Proteomes" id="UP000005640">
    <property type="component" value="Chromosome 5"/>
</dbReference>
<dbReference type="RNAct" id="Q496J9">
    <property type="molecule type" value="protein"/>
</dbReference>
<dbReference type="Bgee" id="ENSG00000122012">
    <property type="expression patterns" value="Expressed in substantia nigra pars reticulata and 121 other cell types or tissues"/>
</dbReference>
<dbReference type="ExpressionAtlas" id="Q496J9">
    <property type="expression patterns" value="baseline and differential"/>
</dbReference>
<dbReference type="GO" id="GO:0098691">
    <property type="term" value="C:dopaminergic synapse"/>
    <property type="evidence" value="ECO:0007669"/>
    <property type="project" value="Ensembl"/>
</dbReference>
<dbReference type="GO" id="GO:0005886">
    <property type="term" value="C:plasma membrane"/>
    <property type="evidence" value="ECO:0000304"/>
    <property type="project" value="Reactome"/>
</dbReference>
<dbReference type="GO" id="GO:0008021">
    <property type="term" value="C:synaptic vesicle"/>
    <property type="evidence" value="ECO:0000304"/>
    <property type="project" value="ParkinsonsUK-UCL"/>
</dbReference>
<dbReference type="GO" id="GO:0030672">
    <property type="term" value="C:synaptic vesicle membrane"/>
    <property type="evidence" value="ECO:0000318"/>
    <property type="project" value="GO_Central"/>
</dbReference>
<dbReference type="GO" id="GO:0022857">
    <property type="term" value="F:transmembrane transporter activity"/>
    <property type="evidence" value="ECO:0007669"/>
    <property type="project" value="InterPro"/>
</dbReference>
<dbReference type="GO" id="GO:0007268">
    <property type="term" value="P:chemical synaptic transmission"/>
    <property type="evidence" value="ECO:0007669"/>
    <property type="project" value="InterPro"/>
</dbReference>
<dbReference type="GO" id="GO:0006836">
    <property type="term" value="P:neurotransmitter transport"/>
    <property type="evidence" value="ECO:0007669"/>
    <property type="project" value="UniProtKB-KW"/>
</dbReference>
<dbReference type="GO" id="GO:2000300">
    <property type="term" value="P:regulation of synaptic vesicle exocytosis"/>
    <property type="evidence" value="ECO:0007669"/>
    <property type="project" value="Ensembl"/>
</dbReference>
<dbReference type="CDD" id="cd17440">
    <property type="entry name" value="MFS_SV2C"/>
    <property type="match status" value="1"/>
</dbReference>
<dbReference type="FunFam" id="1.20.1250.20:FF:000009">
    <property type="entry name" value="Synaptic vesicle glycoprotein 2A"/>
    <property type="match status" value="1"/>
</dbReference>
<dbReference type="FunFam" id="1.20.1250.20:FF:000721">
    <property type="entry name" value="Synaptic vesicle glycoprotein 2C"/>
    <property type="match status" value="1"/>
</dbReference>
<dbReference type="FunFam" id="2.160.20.80:FF:000010">
    <property type="entry name" value="Synaptic vesicle glycoprotein 2C"/>
    <property type="match status" value="1"/>
</dbReference>
<dbReference type="Gene3D" id="2.160.20.80">
    <property type="entry name" value="E3 ubiquitin-protein ligase SopA"/>
    <property type="match status" value="1"/>
</dbReference>
<dbReference type="Gene3D" id="1.20.1250.20">
    <property type="entry name" value="MFS general substrate transporter like domains"/>
    <property type="match status" value="2"/>
</dbReference>
<dbReference type="InterPro" id="IPR055415">
    <property type="entry name" value="LD_SV2"/>
</dbReference>
<dbReference type="InterPro" id="IPR011701">
    <property type="entry name" value="MFS"/>
</dbReference>
<dbReference type="InterPro" id="IPR020846">
    <property type="entry name" value="MFS_dom"/>
</dbReference>
<dbReference type="InterPro" id="IPR005828">
    <property type="entry name" value="MFS_sugar_transport-like"/>
</dbReference>
<dbReference type="InterPro" id="IPR036259">
    <property type="entry name" value="MFS_trans_sf"/>
</dbReference>
<dbReference type="InterPro" id="IPR005829">
    <property type="entry name" value="Sugar_transporter_CS"/>
</dbReference>
<dbReference type="InterPro" id="IPR022308">
    <property type="entry name" value="SV2"/>
</dbReference>
<dbReference type="NCBIfam" id="TIGR01299">
    <property type="entry name" value="synapt_SV2"/>
    <property type="match status" value="1"/>
</dbReference>
<dbReference type="PANTHER" id="PTHR23511">
    <property type="entry name" value="SYNAPTIC VESICLE GLYCOPROTEIN 2"/>
    <property type="match status" value="1"/>
</dbReference>
<dbReference type="PANTHER" id="PTHR23511:SF6">
    <property type="entry name" value="SYNAPTIC VESICLE GLYCOPROTEIN 2C"/>
    <property type="match status" value="1"/>
</dbReference>
<dbReference type="Pfam" id="PF23894">
    <property type="entry name" value="LD_SV2"/>
    <property type="match status" value="1"/>
</dbReference>
<dbReference type="Pfam" id="PF07690">
    <property type="entry name" value="MFS_1"/>
    <property type="match status" value="1"/>
</dbReference>
<dbReference type="Pfam" id="PF00083">
    <property type="entry name" value="Sugar_tr"/>
    <property type="match status" value="1"/>
</dbReference>
<dbReference type="SUPFAM" id="SSF103473">
    <property type="entry name" value="MFS general substrate transporter"/>
    <property type="match status" value="2"/>
</dbReference>
<dbReference type="SUPFAM" id="SSF141571">
    <property type="entry name" value="Pentapeptide repeat-like"/>
    <property type="match status" value="1"/>
</dbReference>
<dbReference type="PROSITE" id="PS50850">
    <property type="entry name" value="MFS"/>
    <property type="match status" value="1"/>
</dbReference>